<name>MSD4_XENTR</name>
<accession>Q6GLA1</accession>
<organism>
    <name type="scientific">Xenopus tropicalis</name>
    <name type="common">Western clawed frog</name>
    <name type="synonym">Silurana tropicalis</name>
    <dbReference type="NCBI Taxonomy" id="8364"/>
    <lineage>
        <taxon>Eukaryota</taxon>
        <taxon>Metazoa</taxon>
        <taxon>Chordata</taxon>
        <taxon>Craniata</taxon>
        <taxon>Vertebrata</taxon>
        <taxon>Euteleostomi</taxon>
        <taxon>Amphibia</taxon>
        <taxon>Batrachia</taxon>
        <taxon>Anura</taxon>
        <taxon>Pipoidea</taxon>
        <taxon>Pipidae</taxon>
        <taxon>Xenopodinae</taxon>
        <taxon>Xenopus</taxon>
        <taxon>Silurana</taxon>
    </lineage>
</organism>
<sequence length="408" mass="47948">MKQLKRKRKSNFSVQETQTLLKEIKKRRDIIFSKQLNTTINEMKRKAWEEIAECVNALGEGEQRTGTEVKRRYLDWRALVKRKRLNSDVKLGGSAFHLPLSDLDDSINDDTDDKPSVLTSESSLEWKNVADVREASESMTEIKVEEEEDPQGFEGPSWKKRVSHPCLGIQLNARQNRILYNKTPSDEQFEIEEEDEMLSTVLPDSREENDLPEEFPRIEEFGTLSSIARIPYKESHLLVTLEKQKLELERQRLSIEAERLQVEKERLQIERERLRHLDMEHERLQLEKERLQIEREKLRLQVMHAEKPNLENDFAQSEKTVLQPLDIEAEKLKLEREHLQLEKERLQLLKFEFEKLHIEKERLQDALHLTFKHIPASCVACDLQDSQIHSATTFDGIKEKTNTLVPGS</sequence>
<reference key="1">
    <citation type="submission" date="2004-06" db="EMBL/GenBank/DDBJ databases">
        <authorList>
            <consortium name="NIH - Xenopus Gene Collection (XGC) project"/>
        </authorList>
    </citation>
    <scope>NUCLEOTIDE SEQUENCE [LARGE SCALE MRNA]</scope>
    <source>
        <tissue>Embryo</tissue>
    </source>
</reference>
<dbReference type="EMBL" id="BC074602">
    <property type="protein sequence ID" value="AAH74602.1"/>
    <property type="molecule type" value="mRNA"/>
</dbReference>
<dbReference type="RefSeq" id="NP_001004822.1">
    <property type="nucleotide sequence ID" value="NM_001004822.1"/>
</dbReference>
<dbReference type="SMR" id="Q6GLA1"/>
<dbReference type="FunCoup" id="Q6GLA1">
    <property type="interactions" value="1642"/>
</dbReference>
<dbReference type="STRING" id="8364.ENSXETP00000042425"/>
<dbReference type="PaxDb" id="8364-ENSXETP00000046246"/>
<dbReference type="DNASU" id="448076"/>
<dbReference type="GeneID" id="448076"/>
<dbReference type="KEGG" id="xtr:448076"/>
<dbReference type="AGR" id="Xenbase:XB-GENE-5752051"/>
<dbReference type="CTD" id="84437"/>
<dbReference type="Xenbase" id="XB-GENE-5752051">
    <property type="gene designation" value="msantd4"/>
</dbReference>
<dbReference type="eggNOG" id="ENOG502RGM9">
    <property type="taxonomic scope" value="Eukaryota"/>
</dbReference>
<dbReference type="HOGENOM" id="CLU_066150_0_0_1"/>
<dbReference type="InParanoid" id="Q6GLA1"/>
<dbReference type="OrthoDB" id="3066195at2759"/>
<dbReference type="Proteomes" id="UP000008143">
    <property type="component" value="Chromosome 2"/>
</dbReference>
<dbReference type="InterPro" id="IPR026162">
    <property type="entry name" value="MSANTD4"/>
</dbReference>
<dbReference type="InterPro" id="IPR028002">
    <property type="entry name" value="Myb_DNA-bind_5"/>
</dbReference>
<dbReference type="PANTHER" id="PTHR21732">
    <property type="entry name" value="MYB/SANT-LIKE DNA-BINDING DOMAIN-CONTAINING PROTEIN 4"/>
    <property type="match status" value="1"/>
</dbReference>
<dbReference type="PANTHER" id="PTHR21732:SF0">
    <property type="entry name" value="MYB_SANT-LIKE DNA-BINDING DOMAIN-CONTAINING PROTEIN 4"/>
    <property type="match status" value="1"/>
</dbReference>
<dbReference type="Pfam" id="PF13873">
    <property type="entry name" value="Myb_DNA-bind_5"/>
    <property type="match status" value="1"/>
</dbReference>
<feature type="chain" id="PRO_0000311833" description="Myb/SANT-like DNA-binding domain-containing protein 4">
    <location>
        <begin position="1"/>
        <end position="408"/>
    </location>
</feature>
<feature type="domain" description="Myb-like">
    <location>
        <begin position="4"/>
        <end position="77"/>
    </location>
</feature>
<feature type="coiled-coil region" evidence="1">
    <location>
        <begin position="236"/>
        <end position="367"/>
    </location>
</feature>
<gene>
    <name type="primary">msantd4</name>
</gene>
<proteinExistence type="evidence at transcript level"/>
<keyword id="KW-0175">Coiled coil</keyword>
<keyword id="KW-1185">Reference proteome</keyword>
<protein>
    <recommendedName>
        <fullName>Myb/SANT-like DNA-binding domain-containing protein 4</fullName>
    </recommendedName>
</protein>
<evidence type="ECO:0000255" key="1"/>